<proteinExistence type="inferred from homology"/>
<reference key="1">
    <citation type="journal article" date="1999" name="Nature">
        <title>Sequence and analysis of chromosome 4 of the plant Arabidopsis thaliana.</title>
        <authorList>
            <person name="Mayer K.F.X."/>
            <person name="Schueller C."/>
            <person name="Wambutt R."/>
            <person name="Murphy G."/>
            <person name="Volckaert G."/>
            <person name="Pohl T."/>
            <person name="Duesterhoeft A."/>
            <person name="Stiekema W."/>
            <person name="Entian K.-D."/>
            <person name="Terryn N."/>
            <person name="Harris B."/>
            <person name="Ansorge W."/>
            <person name="Brandt P."/>
            <person name="Grivell L.A."/>
            <person name="Rieger M."/>
            <person name="Weichselgartner M."/>
            <person name="de Simone V."/>
            <person name="Obermaier B."/>
            <person name="Mache R."/>
            <person name="Mueller M."/>
            <person name="Kreis M."/>
            <person name="Delseny M."/>
            <person name="Puigdomenech P."/>
            <person name="Watson M."/>
            <person name="Schmidtheini T."/>
            <person name="Reichert B."/>
            <person name="Portetelle D."/>
            <person name="Perez-Alonso M."/>
            <person name="Boutry M."/>
            <person name="Bancroft I."/>
            <person name="Vos P."/>
            <person name="Hoheisel J."/>
            <person name="Zimmermann W."/>
            <person name="Wedler H."/>
            <person name="Ridley P."/>
            <person name="Langham S.-A."/>
            <person name="McCullagh B."/>
            <person name="Bilham L."/>
            <person name="Robben J."/>
            <person name="van der Schueren J."/>
            <person name="Grymonprez B."/>
            <person name="Chuang Y.-J."/>
            <person name="Vandenbussche F."/>
            <person name="Braeken M."/>
            <person name="Weltjens I."/>
            <person name="Voet M."/>
            <person name="Bastiaens I."/>
            <person name="Aert R."/>
            <person name="Defoor E."/>
            <person name="Weitzenegger T."/>
            <person name="Bothe G."/>
            <person name="Ramsperger U."/>
            <person name="Hilbert H."/>
            <person name="Braun M."/>
            <person name="Holzer E."/>
            <person name="Brandt A."/>
            <person name="Peters S."/>
            <person name="van Staveren M."/>
            <person name="Dirkse W."/>
            <person name="Mooijman P."/>
            <person name="Klein Lankhorst R."/>
            <person name="Rose M."/>
            <person name="Hauf J."/>
            <person name="Koetter P."/>
            <person name="Berneiser S."/>
            <person name="Hempel S."/>
            <person name="Feldpausch M."/>
            <person name="Lamberth S."/>
            <person name="Van den Daele H."/>
            <person name="De Keyser A."/>
            <person name="Buysshaert C."/>
            <person name="Gielen J."/>
            <person name="Villarroel R."/>
            <person name="De Clercq R."/>
            <person name="van Montagu M."/>
            <person name="Rogers J."/>
            <person name="Cronin A."/>
            <person name="Quail M.A."/>
            <person name="Bray-Allen S."/>
            <person name="Clark L."/>
            <person name="Doggett J."/>
            <person name="Hall S."/>
            <person name="Kay M."/>
            <person name="Lennard N."/>
            <person name="McLay K."/>
            <person name="Mayes R."/>
            <person name="Pettett A."/>
            <person name="Rajandream M.A."/>
            <person name="Lyne M."/>
            <person name="Benes V."/>
            <person name="Rechmann S."/>
            <person name="Borkova D."/>
            <person name="Bloecker H."/>
            <person name="Scharfe M."/>
            <person name="Grimm M."/>
            <person name="Loehnert T.-H."/>
            <person name="Dose S."/>
            <person name="de Haan M."/>
            <person name="Maarse A.C."/>
            <person name="Schaefer M."/>
            <person name="Mueller-Auer S."/>
            <person name="Gabel C."/>
            <person name="Fuchs M."/>
            <person name="Fartmann B."/>
            <person name="Granderath K."/>
            <person name="Dauner D."/>
            <person name="Herzl A."/>
            <person name="Neumann S."/>
            <person name="Argiriou A."/>
            <person name="Vitale D."/>
            <person name="Liguori R."/>
            <person name="Piravandi E."/>
            <person name="Massenet O."/>
            <person name="Quigley F."/>
            <person name="Clabauld G."/>
            <person name="Muendlein A."/>
            <person name="Felber R."/>
            <person name="Schnabl S."/>
            <person name="Hiller R."/>
            <person name="Schmidt W."/>
            <person name="Lecharny A."/>
            <person name="Aubourg S."/>
            <person name="Chefdor F."/>
            <person name="Cooke R."/>
            <person name="Berger C."/>
            <person name="Monfort A."/>
            <person name="Casacuberta E."/>
            <person name="Gibbons T."/>
            <person name="Weber N."/>
            <person name="Vandenbol M."/>
            <person name="Bargues M."/>
            <person name="Terol J."/>
            <person name="Torres A."/>
            <person name="Perez-Perez A."/>
            <person name="Purnelle B."/>
            <person name="Bent E."/>
            <person name="Johnson S."/>
            <person name="Tacon D."/>
            <person name="Jesse T."/>
            <person name="Heijnen L."/>
            <person name="Schwarz S."/>
            <person name="Scholler P."/>
            <person name="Heber S."/>
            <person name="Francs P."/>
            <person name="Bielke C."/>
            <person name="Frishman D."/>
            <person name="Haase D."/>
            <person name="Lemcke K."/>
            <person name="Mewes H.-W."/>
            <person name="Stocker S."/>
            <person name="Zaccaria P."/>
            <person name="Bevan M."/>
            <person name="Wilson R.K."/>
            <person name="de la Bastide M."/>
            <person name="Habermann K."/>
            <person name="Parnell L."/>
            <person name="Dedhia N."/>
            <person name="Gnoj L."/>
            <person name="Schutz K."/>
            <person name="Huang E."/>
            <person name="Spiegel L."/>
            <person name="Sekhon M."/>
            <person name="Murray J."/>
            <person name="Sheet P."/>
            <person name="Cordes M."/>
            <person name="Abu-Threideh J."/>
            <person name="Stoneking T."/>
            <person name="Kalicki J."/>
            <person name="Graves T."/>
            <person name="Harmon G."/>
            <person name="Edwards J."/>
            <person name="Latreille P."/>
            <person name="Courtney L."/>
            <person name="Cloud J."/>
            <person name="Abbott A."/>
            <person name="Scott K."/>
            <person name="Johnson D."/>
            <person name="Minx P."/>
            <person name="Bentley D."/>
            <person name="Fulton B."/>
            <person name="Miller N."/>
            <person name="Greco T."/>
            <person name="Kemp K."/>
            <person name="Kramer J."/>
            <person name="Fulton L."/>
            <person name="Mardis E."/>
            <person name="Dante M."/>
            <person name="Pepin K."/>
            <person name="Hillier L.W."/>
            <person name="Nelson J."/>
            <person name="Spieth J."/>
            <person name="Ryan E."/>
            <person name="Andrews S."/>
            <person name="Geisel C."/>
            <person name="Layman D."/>
            <person name="Du H."/>
            <person name="Ali J."/>
            <person name="Berghoff A."/>
            <person name="Jones K."/>
            <person name="Drone K."/>
            <person name="Cotton M."/>
            <person name="Joshu C."/>
            <person name="Antonoiu B."/>
            <person name="Zidanic M."/>
            <person name="Strong C."/>
            <person name="Sun H."/>
            <person name="Lamar B."/>
            <person name="Yordan C."/>
            <person name="Ma P."/>
            <person name="Zhong J."/>
            <person name="Preston R."/>
            <person name="Vil D."/>
            <person name="Shekher M."/>
            <person name="Matero A."/>
            <person name="Shah R."/>
            <person name="Swaby I.K."/>
            <person name="O'Shaughnessy A."/>
            <person name="Rodriguez M."/>
            <person name="Hoffman J."/>
            <person name="Till S."/>
            <person name="Granat S."/>
            <person name="Shohdy N."/>
            <person name="Hasegawa A."/>
            <person name="Hameed A."/>
            <person name="Lodhi M."/>
            <person name="Johnson A."/>
            <person name="Chen E."/>
            <person name="Marra M.A."/>
            <person name="Martienssen R."/>
            <person name="McCombie W.R."/>
        </authorList>
    </citation>
    <scope>NUCLEOTIDE SEQUENCE [LARGE SCALE GENOMIC DNA]</scope>
    <source>
        <strain>cv. Columbia</strain>
    </source>
</reference>
<reference key="2">
    <citation type="journal article" date="2017" name="Plant J.">
        <title>Araport11: a complete reannotation of the Arabidopsis thaliana reference genome.</title>
        <authorList>
            <person name="Cheng C.Y."/>
            <person name="Krishnakumar V."/>
            <person name="Chan A.P."/>
            <person name="Thibaud-Nissen F."/>
            <person name="Schobel S."/>
            <person name="Town C.D."/>
        </authorList>
    </citation>
    <scope>GENOME REANNOTATION</scope>
    <source>
        <strain>cv. Columbia</strain>
    </source>
</reference>
<reference key="3">
    <citation type="journal article" date="2007" name="Phytochemistry">
        <title>Dirigent proteins in conifer defense II: Extended gene discovery, phylogeny, and constitutive and stress-induced gene expression in spruce (Picea spp.).</title>
        <authorList>
            <person name="Ralph S.G."/>
            <person name="Jancsik S."/>
            <person name="Bohlmann J."/>
        </authorList>
    </citation>
    <scope>GENE FAMILY</scope>
    <scope>NOMENCLATURE</scope>
</reference>
<gene>
    <name type="primary">DIR15</name>
    <name type="ordered locus">At4g38700</name>
    <name type="ORF">F20M13.260</name>
    <name type="ORF">T9A14.4</name>
</gene>
<name>DIR15_ARATH</name>
<protein>
    <recommendedName>
        <fullName>Dirigent protein 15</fullName>
        <shortName>AtDIR15</shortName>
    </recommendedName>
</protein>
<feature type="signal peptide" evidence="2">
    <location>
        <begin position="1"/>
        <end position="19"/>
    </location>
</feature>
<feature type="chain" id="PRO_0000422846" description="Dirigent protein 15">
    <location>
        <begin position="20"/>
        <end position="190"/>
    </location>
</feature>
<feature type="glycosylation site" description="N-linked (GlcNAc...) asparagine" evidence="2">
    <location>
        <position position="63"/>
    </location>
</feature>
<feature type="glycosylation site" description="N-linked (GlcNAc...) asparagine" evidence="2">
    <location>
        <position position="128"/>
    </location>
</feature>
<sequence length="190" mass="20816">MKSTLIIFFTLCLSMAVMARHESYYGNTKPAKLNEEKVTRVRFYLHDTLSGQNPTAVRIAHANLTGGSASPVGFGSLFVIDDPLTVGPEKHSKEIGNGQGMYVSGCKDLSKFTIVMYADLAFTAGKFNGSSISIFSRNPVAEEVGEREIAIVGGRGKFRMARGFVKVKTNKIDMKTGDAVLRYDATVYHY</sequence>
<keyword id="KW-0052">Apoplast</keyword>
<keyword id="KW-0325">Glycoprotein</keyword>
<keyword id="KW-1185">Reference proteome</keyword>
<keyword id="KW-0964">Secreted</keyword>
<keyword id="KW-0732">Signal</keyword>
<evidence type="ECO:0000250" key="1"/>
<evidence type="ECO:0000255" key="2"/>
<evidence type="ECO:0000305" key="3"/>
<organism>
    <name type="scientific">Arabidopsis thaliana</name>
    <name type="common">Mouse-ear cress</name>
    <dbReference type="NCBI Taxonomy" id="3702"/>
    <lineage>
        <taxon>Eukaryota</taxon>
        <taxon>Viridiplantae</taxon>
        <taxon>Streptophyta</taxon>
        <taxon>Embryophyta</taxon>
        <taxon>Tracheophyta</taxon>
        <taxon>Spermatophyta</taxon>
        <taxon>Magnoliopsida</taxon>
        <taxon>eudicotyledons</taxon>
        <taxon>Gunneridae</taxon>
        <taxon>Pentapetalae</taxon>
        <taxon>rosids</taxon>
        <taxon>malvids</taxon>
        <taxon>Brassicales</taxon>
        <taxon>Brassicaceae</taxon>
        <taxon>Camelineae</taxon>
        <taxon>Arabidopsis</taxon>
    </lineage>
</organism>
<accession>F4JUF8</accession>
<accession>Q9SZP7</accession>
<dbReference type="EMBL" id="AL035540">
    <property type="protein sequence ID" value="CAB37526.1"/>
    <property type="status" value="ALT_INIT"/>
    <property type="molecule type" value="Genomic_DNA"/>
</dbReference>
<dbReference type="EMBL" id="AL161593">
    <property type="protein sequence ID" value="CAB80534.1"/>
    <property type="status" value="ALT_INIT"/>
    <property type="molecule type" value="Genomic_DNA"/>
</dbReference>
<dbReference type="EMBL" id="CP002687">
    <property type="protein sequence ID" value="AEE86966.1"/>
    <property type="molecule type" value="Genomic_DNA"/>
</dbReference>
<dbReference type="PIR" id="T05698">
    <property type="entry name" value="T05698"/>
</dbReference>
<dbReference type="RefSeq" id="NP_195582.2">
    <property type="nucleotide sequence ID" value="NM_120031.3"/>
</dbReference>
<dbReference type="SMR" id="F4JUF8"/>
<dbReference type="FunCoup" id="F4JUF8">
    <property type="interactions" value="20"/>
</dbReference>
<dbReference type="STRING" id="3702.F4JUF8"/>
<dbReference type="GlyCosmos" id="F4JUF8">
    <property type="glycosylation" value="2 sites, No reported glycans"/>
</dbReference>
<dbReference type="GlyGen" id="F4JUF8">
    <property type="glycosylation" value="2 sites"/>
</dbReference>
<dbReference type="PaxDb" id="3702-AT4G38700.1"/>
<dbReference type="ProteomicsDB" id="222018"/>
<dbReference type="DNASU" id="830026"/>
<dbReference type="EnsemblPlants" id="AT4G38700.1">
    <property type="protein sequence ID" value="AT4G38700.1"/>
    <property type="gene ID" value="AT4G38700"/>
</dbReference>
<dbReference type="GeneID" id="830026"/>
<dbReference type="Gramene" id="AT4G38700.1">
    <property type="protein sequence ID" value="AT4G38700.1"/>
    <property type="gene ID" value="AT4G38700"/>
</dbReference>
<dbReference type="KEGG" id="ath:AT4G38700"/>
<dbReference type="Araport" id="AT4G38700"/>
<dbReference type="TAIR" id="AT4G38700"/>
<dbReference type="eggNOG" id="ENOG502RXRA">
    <property type="taxonomic scope" value="Eukaryota"/>
</dbReference>
<dbReference type="HOGENOM" id="CLU_087111_2_1_1"/>
<dbReference type="InParanoid" id="F4JUF8"/>
<dbReference type="OMA" id="ARHESYY"/>
<dbReference type="PRO" id="PR:F4JUF8"/>
<dbReference type="Proteomes" id="UP000006548">
    <property type="component" value="Chromosome 4"/>
</dbReference>
<dbReference type="ExpressionAtlas" id="F4JUF8">
    <property type="expression patterns" value="baseline and differential"/>
</dbReference>
<dbReference type="GO" id="GO:0048046">
    <property type="term" value="C:apoplast"/>
    <property type="evidence" value="ECO:0007669"/>
    <property type="project" value="UniProtKB-SubCell"/>
</dbReference>
<dbReference type="GO" id="GO:0009699">
    <property type="term" value="P:phenylpropanoid biosynthetic process"/>
    <property type="evidence" value="ECO:0007669"/>
    <property type="project" value="UniProtKB-ARBA"/>
</dbReference>
<dbReference type="Gene3D" id="2.40.480.10">
    <property type="entry name" value="Allene oxide cyclase-like"/>
    <property type="match status" value="1"/>
</dbReference>
<dbReference type="InterPro" id="IPR044859">
    <property type="entry name" value="Allene_oxi_cyc_Dirigent"/>
</dbReference>
<dbReference type="InterPro" id="IPR004265">
    <property type="entry name" value="Dirigent"/>
</dbReference>
<dbReference type="PANTHER" id="PTHR21495">
    <property type="entry name" value="NUCLEOPORIN-RELATED"/>
    <property type="match status" value="1"/>
</dbReference>
<dbReference type="Pfam" id="PF03018">
    <property type="entry name" value="Dirigent"/>
    <property type="match status" value="1"/>
</dbReference>
<comment type="function">
    <text evidence="1">Dirigent proteins impart stereoselectivity on the phenoxy radical-coupling reaction, yielding optically active lignans from two molecules of coniferyl alcohol in the biosynthesis of lignans, flavonolignans, and alkaloids and thus plays a central role in plant secondary metabolism.</text>
</comment>
<comment type="subunit">
    <text evidence="1">Homodimer.</text>
</comment>
<comment type="subcellular location">
    <subcellularLocation>
        <location evidence="1">Secreted</location>
        <location evidence="1">Extracellular space</location>
        <location evidence="1">Apoplast</location>
    </subcellularLocation>
</comment>
<comment type="similarity">
    <text evidence="3">Belongs to the plant dirigent protein family.</text>
</comment>
<comment type="sequence caution" evidence="3">
    <conflict type="erroneous initiation">
        <sequence resource="EMBL-CDS" id="CAB37526"/>
    </conflict>
    <text>Truncated N-terminus.</text>
</comment>
<comment type="sequence caution" evidence="3">
    <conflict type="erroneous initiation">
        <sequence resource="EMBL-CDS" id="CAB80534"/>
    </conflict>
    <text>Truncated N-terminus.</text>
</comment>